<sequence>MSRKEELYDITIIGGGPTGLFAAFYGGMRQAKVKIIESMPQLGGQLAALYPEKYIYDVAGFPKVKAQDLVNDLKRQAEQFNPTIALEQSVQNVTKETDDTFTIKTDKETHYSKAIIITAGAGAFQPRRLEVEGAKQYEGKNLQYFVNDLNAYAGKNVLISGGGDSAVDWALMLEPVAKNVTLIHRRDKFRAHEHSVELLQKSSVNILTPFAISELSGDGEKIHHVTIQEVKGDAVETLDVDEVIVNFGFVSSLGPIKGWGLEIEKNSIVVNTKMETNIPGIYAAGDICTYPGKVKLIATGFGEAPTAVNNAKAFIDPTARVFPGHSTSLF</sequence>
<proteinExistence type="inferred from homology"/>
<reference key="1">
    <citation type="journal article" date="2000" name="Nucleic Acids Res.">
        <title>Complete genome sequence of the alkaliphilic bacterium Bacillus halodurans and genomic sequence comparison with Bacillus subtilis.</title>
        <authorList>
            <person name="Takami H."/>
            <person name="Nakasone K."/>
            <person name="Takaki Y."/>
            <person name="Maeno G."/>
            <person name="Sasaki R."/>
            <person name="Masui N."/>
            <person name="Fuji F."/>
            <person name="Hirama C."/>
            <person name="Nakamura Y."/>
            <person name="Ogasawara N."/>
            <person name="Kuhara S."/>
            <person name="Horikoshi K."/>
        </authorList>
    </citation>
    <scope>NUCLEOTIDE SEQUENCE [LARGE SCALE GENOMIC DNA]</scope>
    <source>
        <strain>ATCC BAA-125 / DSM 18197 / FERM 7344 / JCM 9153 / C-125</strain>
    </source>
</reference>
<comment type="catalytic activity">
    <reaction evidence="1">
        <text>2 reduced [2Fe-2S]-[ferredoxin] + NADP(+) + H(+) = 2 oxidized [2Fe-2S]-[ferredoxin] + NADPH</text>
        <dbReference type="Rhea" id="RHEA:20125"/>
        <dbReference type="Rhea" id="RHEA-COMP:10000"/>
        <dbReference type="Rhea" id="RHEA-COMP:10001"/>
        <dbReference type="ChEBI" id="CHEBI:15378"/>
        <dbReference type="ChEBI" id="CHEBI:33737"/>
        <dbReference type="ChEBI" id="CHEBI:33738"/>
        <dbReference type="ChEBI" id="CHEBI:57783"/>
        <dbReference type="ChEBI" id="CHEBI:58349"/>
        <dbReference type="EC" id="1.18.1.2"/>
    </reaction>
</comment>
<comment type="cofactor">
    <cofactor evidence="1">
        <name>FAD</name>
        <dbReference type="ChEBI" id="CHEBI:57692"/>
    </cofactor>
    <text evidence="1">Binds 1 FAD per subunit.</text>
</comment>
<comment type="subunit">
    <text evidence="1">Homodimer.</text>
</comment>
<comment type="similarity">
    <text evidence="1">Belongs to the ferredoxin--NADP reductase type 2 family.</text>
</comment>
<keyword id="KW-0274">FAD</keyword>
<keyword id="KW-0285">Flavoprotein</keyword>
<keyword id="KW-0521">NADP</keyword>
<keyword id="KW-0560">Oxidoreductase</keyword>
<keyword id="KW-1185">Reference proteome</keyword>
<evidence type="ECO:0000255" key="1">
    <source>
        <dbReference type="HAMAP-Rule" id="MF_01685"/>
    </source>
</evidence>
<feature type="chain" id="PRO_0000364796" description="Ferredoxin--NADP reductase">
    <location>
        <begin position="1"/>
        <end position="330"/>
    </location>
</feature>
<feature type="binding site" evidence="1">
    <location>
        <position position="18"/>
    </location>
    <ligand>
        <name>FAD</name>
        <dbReference type="ChEBI" id="CHEBI:57692"/>
    </ligand>
</feature>
<feature type="binding site" evidence="1">
    <location>
        <position position="37"/>
    </location>
    <ligand>
        <name>FAD</name>
        <dbReference type="ChEBI" id="CHEBI:57692"/>
    </ligand>
</feature>
<feature type="binding site" evidence="1">
    <location>
        <position position="45"/>
    </location>
    <ligand>
        <name>FAD</name>
        <dbReference type="ChEBI" id="CHEBI:57692"/>
    </ligand>
</feature>
<feature type="binding site" evidence="1">
    <location>
        <position position="50"/>
    </location>
    <ligand>
        <name>FAD</name>
        <dbReference type="ChEBI" id="CHEBI:57692"/>
    </ligand>
</feature>
<feature type="binding site" evidence="1">
    <location>
        <position position="90"/>
    </location>
    <ligand>
        <name>FAD</name>
        <dbReference type="ChEBI" id="CHEBI:57692"/>
    </ligand>
</feature>
<feature type="binding site" evidence="1">
    <location>
        <position position="124"/>
    </location>
    <ligand>
        <name>FAD</name>
        <dbReference type="ChEBI" id="CHEBI:57692"/>
    </ligand>
</feature>
<feature type="binding site" evidence="1">
    <location>
        <position position="286"/>
    </location>
    <ligand>
        <name>FAD</name>
        <dbReference type="ChEBI" id="CHEBI:57692"/>
    </ligand>
</feature>
<feature type="binding site" evidence="1">
    <location>
        <position position="327"/>
    </location>
    <ligand>
        <name>FAD</name>
        <dbReference type="ChEBI" id="CHEBI:57692"/>
    </ligand>
</feature>
<dbReference type="EC" id="1.18.1.2" evidence="1"/>
<dbReference type="EMBL" id="BA000004">
    <property type="protein sequence ID" value="BAB07127.1"/>
    <property type="molecule type" value="Genomic_DNA"/>
</dbReference>
<dbReference type="PIR" id="H84075">
    <property type="entry name" value="H84075"/>
</dbReference>
<dbReference type="RefSeq" id="WP_010899549.1">
    <property type="nucleotide sequence ID" value="NC_002570.2"/>
</dbReference>
<dbReference type="SMR" id="Q9K7F3"/>
<dbReference type="STRING" id="272558.gene:10729321"/>
<dbReference type="KEGG" id="bha:BH3408"/>
<dbReference type="eggNOG" id="COG0492">
    <property type="taxonomic scope" value="Bacteria"/>
</dbReference>
<dbReference type="HOGENOM" id="CLU_031864_5_5_9"/>
<dbReference type="OrthoDB" id="9806179at2"/>
<dbReference type="Proteomes" id="UP000001258">
    <property type="component" value="Chromosome"/>
</dbReference>
<dbReference type="GO" id="GO:0004324">
    <property type="term" value="F:ferredoxin-NADP+ reductase activity"/>
    <property type="evidence" value="ECO:0007669"/>
    <property type="project" value="UniProtKB-UniRule"/>
</dbReference>
<dbReference type="GO" id="GO:0050660">
    <property type="term" value="F:flavin adenine dinucleotide binding"/>
    <property type="evidence" value="ECO:0007669"/>
    <property type="project" value="UniProtKB-UniRule"/>
</dbReference>
<dbReference type="GO" id="GO:0050661">
    <property type="term" value="F:NADP binding"/>
    <property type="evidence" value="ECO:0007669"/>
    <property type="project" value="UniProtKB-UniRule"/>
</dbReference>
<dbReference type="Gene3D" id="3.50.50.60">
    <property type="entry name" value="FAD/NAD(P)-binding domain"/>
    <property type="match status" value="2"/>
</dbReference>
<dbReference type="HAMAP" id="MF_01685">
    <property type="entry name" value="FENR2"/>
    <property type="match status" value="1"/>
</dbReference>
<dbReference type="InterPro" id="IPR036188">
    <property type="entry name" value="FAD/NAD-bd_sf"/>
</dbReference>
<dbReference type="InterPro" id="IPR023753">
    <property type="entry name" value="FAD/NAD-binding_dom"/>
</dbReference>
<dbReference type="InterPro" id="IPR022890">
    <property type="entry name" value="Fd--NADP_Rdtase_type_2"/>
</dbReference>
<dbReference type="InterPro" id="IPR050097">
    <property type="entry name" value="Ferredoxin-NADP_redctase_2"/>
</dbReference>
<dbReference type="PANTHER" id="PTHR48105">
    <property type="entry name" value="THIOREDOXIN REDUCTASE 1-RELATED-RELATED"/>
    <property type="match status" value="1"/>
</dbReference>
<dbReference type="Pfam" id="PF07992">
    <property type="entry name" value="Pyr_redox_2"/>
    <property type="match status" value="1"/>
</dbReference>
<dbReference type="PRINTS" id="PR00368">
    <property type="entry name" value="FADPNR"/>
</dbReference>
<dbReference type="PRINTS" id="PR00469">
    <property type="entry name" value="PNDRDTASEII"/>
</dbReference>
<dbReference type="SUPFAM" id="SSF51905">
    <property type="entry name" value="FAD/NAD(P)-binding domain"/>
    <property type="match status" value="1"/>
</dbReference>
<protein>
    <recommendedName>
        <fullName evidence="1">Ferredoxin--NADP reductase</fullName>
        <shortName evidence="1">FNR</shortName>
        <shortName evidence="1">Fd-NADP(+) reductase</shortName>
        <ecNumber evidence="1">1.18.1.2</ecNumber>
    </recommendedName>
</protein>
<accession>Q9K7F3</accession>
<name>FENR_HALH5</name>
<organism>
    <name type="scientific">Halalkalibacterium halodurans (strain ATCC BAA-125 / DSM 18197 / FERM 7344 / JCM 9153 / C-125)</name>
    <name type="common">Bacillus halodurans</name>
    <dbReference type="NCBI Taxonomy" id="272558"/>
    <lineage>
        <taxon>Bacteria</taxon>
        <taxon>Bacillati</taxon>
        <taxon>Bacillota</taxon>
        <taxon>Bacilli</taxon>
        <taxon>Bacillales</taxon>
        <taxon>Bacillaceae</taxon>
        <taxon>Halalkalibacterium (ex Joshi et al. 2022)</taxon>
    </lineage>
</organism>
<gene>
    <name type="ordered locus">BH3408</name>
</gene>